<protein>
    <recommendedName>
        <fullName>Cytochrome b</fullName>
    </recommendedName>
    <alternativeName>
        <fullName>Complex III subunit 3</fullName>
    </alternativeName>
    <alternativeName>
        <fullName>Complex III subunit III</fullName>
    </alternativeName>
    <alternativeName>
        <fullName>Cytochrome b-c1 complex subunit 3</fullName>
    </alternativeName>
    <alternativeName>
        <fullName>Ubiquinol-cytochrome-c reductase complex cytochrome b subunit</fullName>
    </alternativeName>
</protein>
<accession>Q34161</accession>
<feature type="chain" id="PRO_0000060820" description="Cytochrome b">
    <location>
        <begin position="1"/>
        <end position="379"/>
    </location>
</feature>
<feature type="transmembrane region" description="Helical" evidence="2">
    <location>
        <begin position="33"/>
        <end position="53"/>
    </location>
</feature>
<feature type="transmembrane region" description="Helical" evidence="2">
    <location>
        <begin position="77"/>
        <end position="98"/>
    </location>
</feature>
<feature type="transmembrane region" description="Helical" evidence="2">
    <location>
        <begin position="113"/>
        <end position="133"/>
    </location>
</feature>
<feature type="transmembrane region" description="Helical" evidence="2">
    <location>
        <begin position="178"/>
        <end position="198"/>
    </location>
</feature>
<feature type="transmembrane region" description="Helical" evidence="2">
    <location>
        <begin position="226"/>
        <end position="246"/>
    </location>
</feature>
<feature type="transmembrane region" description="Helical" evidence="2">
    <location>
        <begin position="288"/>
        <end position="308"/>
    </location>
</feature>
<feature type="transmembrane region" description="Helical" evidence="2">
    <location>
        <begin position="320"/>
        <end position="340"/>
    </location>
</feature>
<feature type="transmembrane region" description="Helical" evidence="2">
    <location>
        <begin position="347"/>
        <end position="367"/>
    </location>
</feature>
<feature type="binding site" description="axial binding residue" evidence="2">
    <location>
        <position position="83"/>
    </location>
    <ligand>
        <name>heme b</name>
        <dbReference type="ChEBI" id="CHEBI:60344"/>
        <label>b562</label>
    </ligand>
    <ligandPart>
        <name>Fe</name>
        <dbReference type="ChEBI" id="CHEBI:18248"/>
    </ligandPart>
</feature>
<feature type="binding site" description="axial binding residue" evidence="2">
    <location>
        <position position="97"/>
    </location>
    <ligand>
        <name>heme b</name>
        <dbReference type="ChEBI" id="CHEBI:60344"/>
        <label>b566</label>
    </ligand>
    <ligandPart>
        <name>Fe</name>
        <dbReference type="ChEBI" id="CHEBI:18248"/>
    </ligandPart>
</feature>
<feature type="binding site" description="axial binding residue" evidence="2">
    <location>
        <position position="182"/>
    </location>
    <ligand>
        <name>heme b</name>
        <dbReference type="ChEBI" id="CHEBI:60344"/>
        <label>b562</label>
    </ligand>
    <ligandPart>
        <name>Fe</name>
        <dbReference type="ChEBI" id="CHEBI:18248"/>
    </ligandPart>
</feature>
<feature type="binding site" description="axial binding residue" evidence="2">
    <location>
        <position position="196"/>
    </location>
    <ligand>
        <name>heme b</name>
        <dbReference type="ChEBI" id="CHEBI:60344"/>
        <label>b566</label>
    </ligand>
    <ligandPart>
        <name>Fe</name>
        <dbReference type="ChEBI" id="CHEBI:18248"/>
    </ligandPart>
</feature>
<feature type="binding site" evidence="2">
    <location>
        <position position="201"/>
    </location>
    <ligand>
        <name>a ubiquinone</name>
        <dbReference type="ChEBI" id="CHEBI:16389"/>
    </ligand>
</feature>
<geneLocation type="mitochondrion"/>
<comment type="function">
    <text evidence="2">Component of the ubiquinol-cytochrome c reductase complex (complex III or cytochrome b-c1 complex) that is part of the mitochondrial respiratory chain. The b-c1 complex mediates electron transfer from ubiquinol to cytochrome c. Contributes to the generation of a proton gradient across the mitochondrial membrane that is then used for ATP synthesis.</text>
</comment>
<comment type="cofactor">
    <cofactor evidence="2">
        <name>heme b</name>
        <dbReference type="ChEBI" id="CHEBI:60344"/>
    </cofactor>
    <text evidence="2">Binds 2 heme b groups non-covalently.</text>
</comment>
<comment type="subunit">
    <text evidence="2">The cytochrome bc1 complex contains 11 subunits: 3 respiratory subunits (MT-CYB, CYC1 and UQCRFS1), 2 core proteins (UQCRC1 and UQCRC2) and 6 low-molecular weight proteins (UQCRH/QCR6, UQCRB/QCR7, UQCRQ/QCR8, UQCR10/QCR9, UQCR11/QCR10 and a cleavage product of UQCRFS1). This cytochrome bc1 complex then forms a dimer.</text>
</comment>
<comment type="subcellular location">
    <subcellularLocation>
        <location evidence="2">Mitochondrion inner membrane</location>
        <topology evidence="2">Multi-pass membrane protein</topology>
    </subcellularLocation>
</comment>
<comment type="miscellaneous">
    <text evidence="1">Heme 1 (or BL or b562) is low-potential and absorbs at about 562 nm, and heme 2 (or BH or b566) is high-potential and absorbs at about 566 nm.</text>
</comment>
<comment type="similarity">
    <text evidence="3 4">Belongs to the cytochrome b family.</text>
</comment>
<comment type="caution">
    <text evidence="2">The full-length protein contains only eight transmembrane helices, not nine as predicted by bioinformatics tools.</text>
</comment>
<sequence length="379" mass="42963">MTIMRKSHPLMKIVNHAFVDLPTPPNISGWWNFGSLLGLCLILQILTGLFLAMHYTSDTLTAFASVTHICREVNYGWLIRYMHANGASLFFICLYIHIGRGIYYGSYLYKETWNIGILLLFMTMATAFVGYVLPWGQMSFWGATVITNLLSAIPYIGQDLVEWIWGGFSVDKATLTRFFAFHFILPFIITALVLVHLLFLHETGSNNPLGIPSDCGKVPFHPYYTTKDFLGVILLIMLFMTLVLFFPDKLGDPDNYTPANPLNTPPHIKPEWYFLFAYAILRSIPNKLGGVIALVSSIMVLALLPYLHTSKQRSLSFRPLSQTLFWMLISDLIILTWIGGQPVESPYIIIGQVASILYFSIILIFMPIAGLVENKMLKW</sequence>
<gene>
    <name type="primary">MT-CYB</name>
    <name type="synonym">COB</name>
    <name type="synonym">CYTB</name>
    <name type="synonym">MTCYB</name>
</gene>
<proteinExistence type="inferred from homology"/>
<evidence type="ECO:0000250" key="1"/>
<evidence type="ECO:0000250" key="2">
    <source>
        <dbReference type="UniProtKB" id="P00157"/>
    </source>
</evidence>
<evidence type="ECO:0000255" key="3">
    <source>
        <dbReference type="PROSITE-ProRule" id="PRU00967"/>
    </source>
</evidence>
<evidence type="ECO:0000255" key="4">
    <source>
        <dbReference type="PROSITE-ProRule" id="PRU00968"/>
    </source>
</evidence>
<name>CYB_CRAME</name>
<keyword id="KW-0249">Electron transport</keyword>
<keyword id="KW-0349">Heme</keyword>
<keyword id="KW-0408">Iron</keyword>
<keyword id="KW-0472">Membrane</keyword>
<keyword id="KW-0479">Metal-binding</keyword>
<keyword id="KW-0496">Mitochondrion</keyword>
<keyword id="KW-0999">Mitochondrion inner membrane</keyword>
<keyword id="KW-0679">Respiratory chain</keyword>
<keyword id="KW-0812">Transmembrane</keyword>
<keyword id="KW-1133">Transmembrane helix</keyword>
<keyword id="KW-0813">Transport</keyword>
<keyword id="KW-0830">Ubiquinone</keyword>
<organism>
    <name type="scientific">Cratogeomys merriami</name>
    <name type="common">Mexican pocket gopher</name>
    <name type="synonym">Pappogeomys merriami</name>
    <dbReference type="NCBI Taxonomy" id="13462"/>
    <lineage>
        <taxon>Eukaryota</taxon>
        <taxon>Metazoa</taxon>
        <taxon>Chordata</taxon>
        <taxon>Craniata</taxon>
        <taxon>Vertebrata</taxon>
        <taxon>Euteleostomi</taxon>
        <taxon>Mammalia</taxon>
        <taxon>Eutheria</taxon>
        <taxon>Euarchontoglires</taxon>
        <taxon>Glires</taxon>
        <taxon>Rodentia</taxon>
        <taxon>Castorimorpha</taxon>
        <taxon>Geomyidae</taxon>
        <taxon>Cratogeomys</taxon>
    </lineage>
</organism>
<dbReference type="EMBL" id="L11906">
    <property type="protein sequence ID" value="AAA97492.1"/>
    <property type="molecule type" value="Genomic_DNA"/>
</dbReference>
<dbReference type="SMR" id="Q34161"/>
<dbReference type="GO" id="GO:0005743">
    <property type="term" value="C:mitochondrial inner membrane"/>
    <property type="evidence" value="ECO:0007669"/>
    <property type="project" value="UniProtKB-SubCell"/>
</dbReference>
<dbReference type="GO" id="GO:0045275">
    <property type="term" value="C:respiratory chain complex III"/>
    <property type="evidence" value="ECO:0007669"/>
    <property type="project" value="InterPro"/>
</dbReference>
<dbReference type="GO" id="GO:0046872">
    <property type="term" value="F:metal ion binding"/>
    <property type="evidence" value="ECO:0007669"/>
    <property type="project" value="UniProtKB-KW"/>
</dbReference>
<dbReference type="GO" id="GO:0008121">
    <property type="term" value="F:ubiquinol-cytochrome-c reductase activity"/>
    <property type="evidence" value="ECO:0007669"/>
    <property type="project" value="InterPro"/>
</dbReference>
<dbReference type="GO" id="GO:0006122">
    <property type="term" value="P:mitochondrial electron transport, ubiquinol to cytochrome c"/>
    <property type="evidence" value="ECO:0007669"/>
    <property type="project" value="TreeGrafter"/>
</dbReference>
<dbReference type="CDD" id="cd00290">
    <property type="entry name" value="cytochrome_b_C"/>
    <property type="match status" value="1"/>
</dbReference>
<dbReference type="CDD" id="cd00284">
    <property type="entry name" value="Cytochrome_b_N"/>
    <property type="match status" value="1"/>
</dbReference>
<dbReference type="FunFam" id="1.20.810.10:FF:000002">
    <property type="entry name" value="Cytochrome b"/>
    <property type="match status" value="1"/>
</dbReference>
<dbReference type="Gene3D" id="1.20.810.10">
    <property type="entry name" value="Cytochrome Bc1 Complex, Chain C"/>
    <property type="match status" value="1"/>
</dbReference>
<dbReference type="InterPro" id="IPR005798">
    <property type="entry name" value="Cyt_b/b6_C"/>
</dbReference>
<dbReference type="InterPro" id="IPR036150">
    <property type="entry name" value="Cyt_b/b6_C_sf"/>
</dbReference>
<dbReference type="InterPro" id="IPR005797">
    <property type="entry name" value="Cyt_b/b6_N"/>
</dbReference>
<dbReference type="InterPro" id="IPR027387">
    <property type="entry name" value="Cytb/b6-like_sf"/>
</dbReference>
<dbReference type="InterPro" id="IPR030689">
    <property type="entry name" value="Cytochrome_b"/>
</dbReference>
<dbReference type="InterPro" id="IPR048260">
    <property type="entry name" value="Cytochrome_b_C_euk/bac"/>
</dbReference>
<dbReference type="InterPro" id="IPR048259">
    <property type="entry name" value="Cytochrome_b_N_euk/bac"/>
</dbReference>
<dbReference type="InterPro" id="IPR016174">
    <property type="entry name" value="Di-haem_cyt_TM"/>
</dbReference>
<dbReference type="PANTHER" id="PTHR19271">
    <property type="entry name" value="CYTOCHROME B"/>
    <property type="match status" value="1"/>
</dbReference>
<dbReference type="PANTHER" id="PTHR19271:SF16">
    <property type="entry name" value="CYTOCHROME B"/>
    <property type="match status" value="1"/>
</dbReference>
<dbReference type="Pfam" id="PF00032">
    <property type="entry name" value="Cytochrom_B_C"/>
    <property type="match status" value="1"/>
</dbReference>
<dbReference type="Pfam" id="PF00033">
    <property type="entry name" value="Cytochrome_B"/>
    <property type="match status" value="1"/>
</dbReference>
<dbReference type="PIRSF" id="PIRSF038885">
    <property type="entry name" value="COB"/>
    <property type="match status" value="1"/>
</dbReference>
<dbReference type="SUPFAM" id="SSF81648">
    <property type="entry name" value="a domain/subunit of cytochrome bc1 complex (Ubiquinol-cytochrome c reductase)"/>
    <property type="match status" value="1"/>
</dbReference>
<dbReference type="SUPFAM" id="SSF81342">
    <property type="entry name" value="Transmembrane di-heme cytochromes"/>
    <property type="match status" value="1"/>
</dbReference>
<dbReference type="PROSITE" id="PS51003">
    <property type="entry name" value="CYTB_CTER"/>
    <property type="match status" value="1"/>
</dbReference>
<dbReference type="PROSITE" id="PS51002">
    <property type="entry name" value="CYTB_NTER"/>
    <property type="match status" value="1"/>
</dbReference>
<reference key="1">
    <citation type="journal article" date="1993" name="Mol. Phylogenet. Evol.">
        <title>Phylogenetic relationships of pocket gophers (Cratogeomys and Pappogeomys) based on mitochondrial DNA cytochrome b sequences.</title>
        <authorList>
            <person name="Dewalt T.S."/>
            <person name="Sudman P.D."/>
            <person name="Hafner M.S."/>
            <person name="Davis S.K."/>
        </authorList>
    </citation>
    <scope>NUCLEOTIDE SEQUENCE [GENOMIC DNA]</scope>
</reference>